<reference key="1">
    <citation type="journal article" date="2003" name="Protein Expr. Purif.">
        <title>Expression in E. coli and purification of Thermus thermophilus translation initiation factors IF1 and IF3.</title>
        <authorList>
            <person name="Wolfrum A."/>
            <person name="Brock S."/>
            <person name="Mac T."/>
            <person name="Grillenbeck N."/>
        </authorList>
    </citation>
    <scope>NUCLEOTIDE SEQUENCE [GENOMIC DNA]</scope>
</reference>
<comment type="function">
    <text evidence="1">One of the essential components for the initiation of protein synthesis. Stabilizes the binding of IF-2 and IF-3 on the 30S subunit to which N-formylmethionyl-tRNA(fMet) subsequently binds. Helps modulate mRNA selection, yielding the 30S pre-initiation complex (PIC). Upon addition of the 50S ribosomal subunit IF-1, IF-2 and IF-3 are released leaving the mature 70S translation initiation complex.</text>
</comment>
<comment type="biophysicochemical properties">
    <temperatureDependence>
        <text>Stable at high temperatures.</text>
    </temperatureDependence>
</comment>
<comment type="subunit">
    <text evidence="1">Component of the 30S ribosomal translation pre-initiation complex which assembles on the 30S ribosome in the order IF-2 and IF-3, IF-1 and N-formylmethionyl-tRNA(fMet); mRNA recruitment can occur at any time during PIC assembly.</text>
</comment>
<comment type="subcellular location">
    <subcellularLocation>
        <location evidence="1">Cytoplasm</location>
    </subcellularLocation>
</comment>
<comment type="similarity">
    <text evidence="1">Belongs to the IF-1 family.</text>
</comment>
<evidence type="ECO:0000255" key="1">
    <source>
        <dbReference type="HAMAP-Rule" id="MF_00075"/>
    </source>
</evidence>
<organism>
    <name type="scientific">Thermus thermophilus</name>
    <dbReference type="NCBI Taxonomy" id="274"/>
    <lineage>
        <taxon>Bacteria</taxon>
        <taxon>Thermotogati</taxon>
        <taxon>Deinococcota</taxon>
        <taxon>Deinococci</taxon>
        <taxon>Thermales</taxon>
        <taxon>Thermaceae</taxon>
        <taxon>Thermus</taxon>
    </lineage>
</organism>
<keyword id="KW-0963">Cytoplasm</keyword>
<keyword id="KW-0396">Initiation factor</keyword>
<keyword id="KW-0648">Protein biosynthesis</keyword>
<keyword id="KW-0694">RNA-binding</keyword>
<keyword id="KW-0699">rRNA-binding</keyword>
<feature type="chain" id="PRO_0000095894" description="Translation initiation factor IF-1">
    <location>
        <begin position="1"/>
        <end position="72"/>
    </location>
</feature>
<feature type="domain" description="S1-like" evidence="1">
    <location>
        <begin position="1"/>
        <end position="72"/>
    </location>
</feature>
<proteinExistence type="evidence at protein level"/>
<protein>
    <recommendedName>
        <fullName evidence="1">Translation initiation factor IF-1</fullName>
    </recommendedName>
</protein>
<gene>
    <name evidence="1" type="primary">infA</name>
</gene>
<name>IF1_THETH</name>
<dbReference type="EMBL" id="AJ495839">
    <property type="protein sequence ID" value="CAD42330.1"/>
    <property type="molecule type" value="Genomic_DNA"/>
</dbReference>
<dbReference type="RefSeq" id="WP_008633373.1">
    <property type="nucleotide sequence ID" value="NZ_VHHQ01000024.1"/>
</dbReference>
<dbReference type="SMR" id="Q8KLI6"/>
<dbReference type="GeneID" id="3168806"/>
<dbReference type="OMA" id="EGHQCLC"/>
<dbReference type="GO" id="GO:0005829">
    <property type="term" value="C:cytosol"/>
    <property type="evidence" value="ECO:0007669"/>
    <property type="project" value="TreeGrafter"/>
</dbReference>
<dbReference type="GO" id="GO:0043022">
    <property type="term" value="F:ribosome binding"/>
    <property type="evidence" value="ECO:0007669"/>
    <property type="project" value="UniProtKB-UniRule"/>
</dbReference>
<dbReference type="GO" id="GO:0019843">
    <property type="term" value="F:rRNA binding"/>
    <property type="evidence" value="ECO:0007669"/>
    <property type="project" value="UniProtKB-UniRule"/>
</dbReference>
<dbReference type="GO" id="GO:0003743">
    <property type="term" value="F:translation initiation factor activity"/>
    <property type="evidence" value="ECO:0007669"/>
    <property type="project" value="UniProtKB-UniRule"/>
</dbReference>
<dbReference type="CDD" id="cd04451">
    <property type="entry name" value="S1_IF1"/>
    <property type="match status" value="1"/>
</dbReference>
<dbReference type="FunFam" id="2.40.50.140:FF:000002">
    <property type="entry name" value="Translation initiation factor IF-1"/>
    <property type="match status" value="1"/>
</dbReference>
<dbReference type="Gene3D" id="2.40.50.140">
    <property type="entry name" value="Nucleic acid-binding proteins"/>
    <property type="match status" value="1"/>
</dbReference>
<dbReference type="HAMAP" id="MF_00075">
    <property type="entry name" value="IF_1"/>
    <property type="match status" value="1"/>
</dbReference>
<dbReference type="InterPro" id="IPR012340">
    <property type="entry name" value="NA-bd_OB-fold"/>
</dbReference>
<dbReference type="InterPro" id="IPR006196">
    <property type="entry name" value="RNA-binding_domain_S1_IF1"/>
</dbReference>
<dbReference type="InterPro" id="IPR004368">
    <property type="entry name" value="TIF_IF1"/>
</dbReference>
<dbReference type="NCBIfam" id="TIGR00008">
    <property type="entry name" value="infA"/>
    <property type="match status" value="1"/>
</dbReference>
<dbReference type="PANTHER" id="PTHR33370">
    <property type="entry name" value="TRANSLATION INITIATION FACTOR IF-1, CHLOROPLASTIC"/>
    <property type="match status" value="1"/>
</dbReference>
<dbReference type="PANTHER" id="PTHR33370:SF1">
    <property type="entry name" value="TRANSLATION INITIATION FACTOR IF-1, CHLOROPLASTIC"/>
    <property type="match status" value="1"/>
</dbReference>
<dbReference type="Pfam" id="PF01176">
    <property type="entry name" value="eIF-1a"/>
    <property type="match status" value="1"/>
</dbReference>
<dbReference type="SUPFAM" id="SSF50249">
    <property type="entry name" value="Nucleic acid-binding proteins"/>
    <property type="match status" value="1"/>
</dbReference>
<dbReference type="PROSITE" id="PS50832">
    <property type="entry name" value="S1_IF1_TYPE"/>
    <property type="match status" value="1"/>
</dbReference>
<sequence length="72" mass="8234">MAKEKDTIRTEGVVTEALPNATFRVKLDSGPEILAYISGKMRMHYIRILPGDRVVVEITPYDPTRGRIVYRK</sequence>
<accession>Q8KLI6</accession>